<comment type="function">
    <text evidence="6 7 8 9 11 12 13 17 18">Lysin motif (LysM) receptor kinase that functions as a cell surface receptor in chitin elicitor (chitooligosaccharides) signaling leading to innate immunity toward both biotic and abiotic stresses (e.g. tolerance to salinity, heavy-metal stresses, and Botrytis cinerea infection). Recognizes microbe-derived N-acetylglucosamine (NAG)-containing ligands. Involved in the resistance to pathogenic fungi Alternaria brassicicola and Erysiphe cichoracearum, probably by sensing microbe-associated molecular patterns (MAMP) and pathogen-associated molecular patterns (PAMP). Plays an essential role in detecting peptidoglycans (e.g. PGNs) and restricting bacterial growth. Target of the bacterial type III effector E3-ligase protein hopAB2/avrPtoB of Pseudomonas syringae pv. tomato DC3000 that mediates ubiquitination and subsequent proteolysis, thus blocking all defense responses by suppressing PAMP-triggered immunity (PTI). Mediates chitin-induced phosphorylation of PBL27 (PubMed:24750441).</text>
</comment>
<comment type="catalytic activity">
    <reaction evidence="6 11">
        <text>L-seryl-[protein] + ATP = O-phospho-L-seryl-[protein] + ADP + H(+)</text>
        <dbReference type="Rhea" id="RHEA:17989"/>
        <dbReference type="Rhea" id="RHEA-COMP:9863"/>
        <dbReference type="Rhea" id="RHEA-COMP:11604"/>
        <dbReference type="ChEBI" id="CHEBI:15378"/>
        <dbReference type="ChEBI" id="CHEBI:29999"/>
        <dbReference type="ChEBI" id="CHEBI:30616"/>
        <dbReference type="ChEBI" id="CHEBI:83421"/>
        <dbReference type="ChEBI" id="CHEBI:456216"/>
        <dbReference type="EC" id="2.7.11.1"/>
    </reaction>
</comment>
<comment type="catalytic activity">
    <reaction evidence="6 11">
        <text>L-threonyl-[protein] + ATP = O-phospho-L-threonyl-[protein] + ADP + H(+)</text>
        <dbReference type="Rhea" id="RHEA:46608"/>
        <dbReference type="Rhea" id="RHEA-COMP:11060"/>
        <dbReference type="Rhea" id="RHEA-COMP:11605"/>
        <dbReference type="ChEBI" id="CHEBI:15378"/>
        <dbReference type="ChEBI" id="CHEBI:30013"/>
        <dbReference type="ChEBI" id="CHEBI:30616"/>
        <dbReference type="ChEBI" id="CHEBI:61977"/>
        <dbReference type="ChEBI" id="CHEBI:456216"/>
        <dbReference type="EC" id="2.7.11.1"/>
    </reaction>
</comment>
<comment type="activity regulation">
    <text evidence="14">Activated by chitin-mediated homodimerization.</text>
</comment>
<comment type="subunit">
    <text evidence="8 10 11 14 15 17 18 19 20">Forms homodimers and homooligomers. Homodimerization is required to trigger plant defenses. Binds to chitin, chitosan and chito-oligomer oligosaccharide elicitors. Interaction with chitin octamer (NAG(8)) promotes homodimerization while shorter chitin oligomers inhibit homodimerization. Interacts with Pseudomonas syringae hopAB2/avrPtoB. Interacts (preferentially when unphosphorylated) with PBL27 at the plasma membrane (PubMed:24750441, PubMed:27679653). Binds to IOS1 (PubMed:27317676).</text>
</comment>
<comment type="interaction">
    <interactant intactId="EBI-15672582">
        <id>A8R7E6</id>
    </interactant>
    <interactant intactId="EBI-15672582">
        <id>A8R7E6</id>
        <label>CERK1</label>
    </interactant>
    <organismsDiffer>false</organismsDiffer>
    <experiments>4</experiments>
</comment>
<comment type="subcellular location">
    <subcellularLocation>
        <location evidence="6 18 20">Cell membrane</location>
        <topology evidence="6">Single-pass membrane protein</topology>
    </subcellularLocation>
</comment>
<comment type="tissue specificity">
    <text evidence="7">Expressed ubiquitously, with lowest expression in pollen.</text>
</comment>
<comment type="induction">
    <text evidence="6 16">Induced upon treatment with chitin oligosaccharide elicitor and flagellin (e.g. flg22).</text>
</comment>
<comment type="PTM">
    <text evidence="11 14">Autophosphorylated. Autophosphorylation is induced by chitin and derivatives.</text>
</comment>
<comment type="PTM">
    <text evidence="8">Ubiquitinated and targeted to the proteasome by hopAB2/avrPtoB of Pseudomonas syringae pv. tomato DC3000.</text>
</comment>
<comment type="disruption phenotype">
    <text evidence="6 7 9 12 13 18">Complete loss of response to the chitin elicitor, including loss of MAPK activation, generation of reactive oxygen species, and transcriptional activation. Impaired chitin-mediated resistance against biotic and abiotic stresses such as tolerance to salinity, heavy-metal stresses, and Botrytis cinerea infection. Reduced resistance to incompatible fungi such as Erysiphe cichoracearum and Alternaria brassicicola. Enhanced susceptibility to Pseudomonas syringae pv. tomato DC3000 associated with peptidoglycan insensitivity. Impaired chitin-induced phosphorylation of PBL27 (PubMed:24750441).</text>
</comment>
<comment type="similarity">
    <text evidence="3">Belongs to the protein kinase superfamily. Ser/Thr protein kinase family.</text>
</comment>
<comment type="sequence caution" evidence="21">
    <conflict type="erroneous gene model prediction">
        <sequence resource="EMBL-CDS" id="BAB02358"/>
    </conflict>
</comment>
<evidence type="ECO:0000250" key="1">
    <source>
        <dbReference type="UniProtKB" id="O48814"/>
    </source>
</evidence>
<evidence type="ECO:0000255" key="2"/>
<evidence type="ECO:0000255" key="3">
    <source>
        <dbReference type="PROSITE-ProRule" id="PRU00159"/>
    </source>
</evidence>
<evidence type="ECO:0000255" key="4">
    <source>
        <dbReference type="PROSITE-ProRule" id="PRU01118"/>
    </source>
</evidence>
<evidence type="ECO:0000255" key="5">
    <source>
        <dbReference type="PROSITE-ProRule" id="PRU10027"/>
    </source>
</evidence>
<evidence type="ECO:0000269" key="6">
    <source>
    </source>
</evidence>
<evidence type="ECO:0000269" key="7">
    <source>
    </source>
</evidence>
<evidence type="ECO:0000269" key="8">
    <source>
    </source>
</evidence>
<evidence type="ECO:0000269" key="9">
    <source>
    </source>
</evidence>
<evidence type="ECO:0000269" key="10">
    <source>
    </source>
</evidence>
<evidence type="ECO:0000269" key="11">
    <source>
    </source>
</evidence>
<evidence type="ECO:0000269" key="12">
    <source>
    </source>
</evidence>
<evidence type="ECO:0000269" key="13">
    <source>
    </source>
</evidence>
<evidence type="ECO:0000269" key="14">
    <source>
    </source>
</evidence>
<evidence type="ECO:0000269" key="15">
    <source>
    </source>
</evidence>
<evidence type="ECO:0000269" key="16">
    <source>
    </source>
</evidence>
<evidence type="ECO:0000269" key="17">
    <source>
    </source>
</evidence>
<evidence type="ECO:0000269" key="18">
    <source>
    </source>
</evidence>
<evidence type="ECO:0000269" key="19">
    <source>
    </source>
</evidence>
<evidence type="ECO:0000269" key="20">
    <source>
    </source>
</evidence>
<evidence type="ECO:0000305" key="21"/>
<evidence type="ECO:0007744" key="22">
    <source>
        <dbReference type="PDB" id="4EBY"/>
    </source>
</evidence>
<evidence type="ECO:0007829" key="23">
    <source>
        <dbReference type="PDB" id="4EBY"/>
    </source>
</evidence>
<evidence type="ECO:0007829" key="24">
    <source>
        <dbReference type="PDB" id="4EBZ"/>
    </source>
</evidence>
<keyword id="KW-0002">3D-structure</keyword>
<keyword id="KW-0067">ATP-binding</keyword>
<keyword id="KW-1003">Cell membrane</keyword>
<keyword id="KW-0147">Chitin-binding</keyword>
<keyword id="KW-1015">Disulfide bond</keyword>
<keyword id="KW-0325">Glycoprotein</keyword>
<keyword id="KW-0418">Kinase</keyword>
<keyword id="KW-0472">Membrane</keyword>
<keyword id="KW-0547">Nucleotide-binding</keyword>
<keyword id="KW-0597">Phosphoprotein</keyword>
<keyword id="KW-0611">Plant defense</keyword>
<keyword id="KW-0675">Receptor</keyword>
<keyword id="KW-1185">Reference proteome</keyword>
<keyword id="KW-0677">Repeat</keyword>
<keyword id="KW-0723">Serine/threonine-protein kinase</keyword>
<keyword id="KW-0732">Signal</keyword>
<keyword id="KW-0808">Transferase</keyword>
<keyword id="KW-0812">Transmembrane</keyword>
<keyword id="KW-1133">Transmembrane helix</keyword>
<keyword id="KW-0832">Ubl conjugation</keyword>
<accession>A8R7E6</accession>
<accession>Q9LVE3</accession>
<name>CERK1_ARATH</name>
<dbReference type="EC" id="2.7.11.1"/>
<dbReference type="EMBL" id="AB367524">
    <property type="protein sequence ID" value="BAF92788.1"/>
    <property type="molecule type" value="mRNA"/>
</dbReference>
<dbReference type="EMBL" id="AB019232">
    <property type="protein sequence ID" value="BAB02358.1"/>
    <property type="status" value="ALT_SEQ"/>
    <property type="molecule type" value="Genomic_DNA"/>
</dbReference>
<dbReference type="EMBL" id="CP002686">
    <property type="protein sequence ID" value="AEE76532.1"/>
    <property type="molecule type" value="Genomic_DNA"/>
</dbReference>
<dbReference type="RefSeq" id="NP_566689.2">
    <property type="nucleotide sequence ID" value="NM_113058.4"/>
</dbReference>
<dbReference type="PDB" id="4EBY">
    <property type="method" value="X-ray"/>
    <property type="resolution" value="1.65 A"/>
    <property type="chains" value="A=25-230"/>
</dbReference>
<dbReference type="PDB" id="4EBZ">
    <property type="method" value="X-ray"/>
    <property type="resolution" value="1.79 A"/>
    <property type="chains" value="A=25-230"/>
</dbReference>
<dbReference type="PDBsum" id="4EBY"/>
<dbReference type="PDBsum" id="4EBZ"/>
<dbReference type="SMR" id="A8R7E6"/>
<dbReference type="BioGRID" id="7049">
    <property type="interactions" value="70"/>
</dbReference>
<dbReference type="FunCoup" id="A8R7E6">
    <property type="interactions" value="1763"/>
</dbReference>
<dbReference type="IntAct" id="A8R7E6">
    <property type="interactions" value="8"/>
</dbReference>
<dbReference type="STRING" id="3702.A8R7E6"/>
<dbReference type="GlyCosmos" id="A8R7E6">
    <property type="glycosylation" value="5 sites, No reported glycans"/>
</dbReference>
<dbReference type="GlyGen" id="A8R7E6">
    <property type="glycosylation" value="5 sites"/>
</dbReference>
<dbReference type="iPTMnet" id="A8R7E6"/>
<dbReference type="PaxDb" id="3702-AT3G21630.1"/>
<dbReference type="ProteomicsDB" id="220385"/>
<dbReference type="EnsemblPlants" id="AT3G21630.1">
    <property type="protein sequence ID" value="AT3G21630.1"/>
    <property type="gene ID" value="AT3G21630"/>
</dbReference>
<dbReference type="GeneID" id="821717"/>
<dbReference type="Gramene" id="AT3G21630.1">
    <property type="protein sequence ID" value="AT3G21630.1"/>
    <property type="gene ID" value="AT3G21630"/>
</dbReference>
<dbReference type="KEGG" id="ath:AT3G21630"/>
<dbReference type="Araport" id="AT3G21630"/>
<dbReference type="TAIR" id="AT3G21630">
    <property type="gene designation" value="CERK1"/>
</dbReference>
<dbReference type="eggNOG" id="ENOG502QPX8">
    <property type="taxonomic scope" value="Eukaryota"/>
</dbReference>
<dbReference type="HOGENOM" id="CLU_000288_99_3_1"/>
<dbReference type="InParanoid" id="A8R7E6"/>
<dbReference type="OMA" id="PWTKRVQ"/>
<dbReference type="OrthoDB" id="4062651at2759"/>
<dbReference type="PhylomeDB" id="A8R7E6"/>
<dbReference type="EvolutionaryTrace" id="A8R7E6"/>
<dbReference type="PRO" id="PR:A8R7E6"/>
<dbReference type="Proteomes" id="UP000006548">
    <property type="component" value="Chromosome 3"/>
</dbReference>
<dbReference type="ExpressionAtlas" id="A8R7E6">
    <property type="expression patterns" value="baseline and differential"/>
</dbReference>
<dbReference type="GO" id="GO:0005886">
    <property type="term" value="C:plasma membrane"/>
    <property type="evidence" value="ECO:0000314"/>
    <property type="project" value="UniProtKB"/>
</dbReference>
<dbReference type="GO" id="GO:0005524">
    <property type="term" value="F:ATP binding"/>
    <property type="evidence" value="ECO:0007669"/>
    <property type="project" value="UniProtKB-KW"/>
</dbReference>
<dbReference type="GO" id="GO:0008061">
    <property type="term" value="F:chitin binding"/>
    <property type="evidence" value="ECO:0000314"/>
    <property type="project" value="UniProtKB"/>
</dbReference>
<dbReference type="GO" id="GO:2001080">
    <property type="term" value="F:chitosan binding"/>
    <property type="evidence" value="ECO:0000314"/>
    <property type="project" value="UniProtKB"/>
</dbReference>
<dbReference type="GO" id="GO:0042802">
    <property type="term" value="F:identical protein binding"/>
    <property type="evidence" value="ECO:0000353"/>
    <property type="project" value="IntAct"/>
</dbReference>
<dbReference type="GO" id="GO:0016301">
    <property type="term" value="F:kinase activity"/>
    <property type="evidence" value="ECO:0000314"/>
    <property type="project" value="TAIR"/>
</dbReference>
<dbReference type="GO" id="GO:0042803">
    <property type="term" value="F:protein homodimerization activity"/>
    <property type="evidence" value="ECO:0000314"/>
    <property type="project" value="UniProtKB"/>
</dbReference>
<dbReference type="GO" id="GO:0004672">
    <property type="term" value="F:protein kinase activity"/>
    <property type="evidence" value="ECO:0000315"/>
    <property type="project" value="GO_Central"/>
</dbReference>
<dbReference type="GO" id="GO:0106310">
    <property type="term" value="F:protein serine kinase activity"/>
    <property type="evidence" value="ECO:0007669"/>
    <property type="project" value="RHEA"/>
</dbReference>
<dbReference type="GO" id="GO:0004674">
    <property type="term" value="F:protein serine/threonine kinase activity"/>
    <property type="evidence" value="ECO:0000314"/>
    <property type="project" value="UniProtKB"/>
</dbReference>
<dbReference type="GO" id="GO:0019199">
    <property type="term" value="F:transmembrane receptor protein kinase activity"/>
    <property type="evidence" value="ECO:0000314"/>
    <property type="project" value="TAIR"/>
</dbReference>
<dbReference type="GO" id="GO:0002752">
    <property type="term" value="P:cell surface pattern recognition receptor signaling pathway"/>
    <property type="evidence" value="ECO:0000314"/>
    <property type="project" value="UniProtKB"/>
</dbReference>
<dbReference type="GO" id="GO:0071323">
    <property type="term" value="P:cellular response to chitin"/>
    <property type="evidence" value="ECO:0000315"/>
    <property type="project" value="UniProtKB"/>
</dbReference>
<dbReference type="GO" id="GO:0071219">
    <property type="term" value="P:cellular response to molecule of bacterial origin"/>
    <property type="evidence" value="ECO:0000270"/>
    <property type="project" value="UniProtKB"/>
</dbReference>
<dbReference type="GO" id="GO:0042742">
    <property type="term" value="P:defense response to bacterium"/>
    <property type="evidence" value="ECO:0000314"/>
    <property type="project" value="UniProtKB"/>
</dbReference>
<dbReference type="GO" id="GO:0050832">
    <property type="term" value="P:defense response to fungus"/>
    <property type="evidence" value="ECO:0000315"/>
    <property type="project" value="TAIR"/>
</dbReference>
<dbReference type="GO" id="GO:0032491">
    <property type="term" value="P:detection of molecule of fungal origin"/>
    <property type="evidence" value="ECO:0000315"/>
    <property type="project" value="TAIR"/>
</dbReference>
<dbReference type="GO" id="GO:0032499">
    <property type="term" value="P:detection of peptidoglycan"/>
    <property type="evidence" value="ECO:0000315"/>
    <property type="project" value="TAIR"/>
</dbReference>
<dbReference type="GO" id="GO:0045087">
    <property type="term" value="P:innate immune response"/>
    <property type="evidence" value="ECO:0000315"/>
    <property type="project" value="TAIR"/>
</dbReference>
<dbReference type="GO" id="GO:0035556">
    <property type="term" value="P:intracellular signal transduction"/>
    <property type="evidence" value="ECO:0000314"/>
    <property type="project" value="TAIR"/>
</dbReference>
<dbReference type="GO" id="GO:0046777">
    <property type="term" value="P:protein autophosphorylation"/>
    <property type="evidence" value="ECO:0000314"/>
    <property type="project" value="UniProtKB"/>
</dbReference>
<dbReference type="GO" id="GO:0006468">
    <property type="term" value="P:protein phosphorylation"/>
    <property type="evidence" value="ECO:0000314"/>
    <property type="project" value="TAIR"/>
</dbReference>
<dbReference type="GO" id="GO:0010200">
    <property type="term" value="P:response to chitin"/>
    <property type="evidence" value="ECO:0000315"/>
    <property type="project" value="TAIR"/>
</dbReference>
<dbReference type="CDD" id="cd00118">
    <property type="entry name" value="LysM"/>
    <property type="match status" value="1"/>
</dbReference>
<dbReference type="FunFam" id="3.30.200.20:FF:000468">
    <property type="entry name" value="LysM receptor kinase 2"/>
    <property type="match status" value="1"/>
</dbReference>
<dbReference type="FunFam" id="1.10.510.10:FF:000468">
    <property type="entry name" value="PTI1-like tyrosine-protein kinase 3"/>
    <property type="match status" value="1"/>
</dbReference>
<dbReference type="Gene3D" id="3.30.200.20">
    <property type="entry name" value="Phosphorylase Kinase, domain 1"/>
    <property type="match status" value="1"/>
</dbReference>
<dbReference type="Gene3D" id="1.10.510.10">
    <property type="entry name" value="Transferase(Phosphotransferase) domain 1"/>
    <property type="match status" value="1"/>
</dbReference>
<dbReference type="InterPro" id="IPR044812">
    <property type="entry name" value="CERK1/LYK3-like"/>
</dbReference>
<dbReference type="InterPro" id="IPR011009">
    <property type="entry name" value="Kinase-like_dom_sf"/>
</dbReference>
<dbReference type="InterPro" id="IPR056562">
    <property type="entry name" value="LysM2_CERK1_LYK3_4_5"/>
</dbReference>
<dbReference type="InterPro" id="IPR018392">
    <property type="entry name" value="LysM_dom"/>
</dbReference>
<dbReference type="InterPro" id="IPR000719">
    <property type="entry name" value="Prot_kinase_dom"/>
</dbReference>
<dbReference type="InterPro" id="IPR017441">
    <property type="entry name" value="Protein_kinase_ATP_BS"/>
</dbReference>
<dbReference type="InterPro" id="IPR001245">
    <property type="entry name" value="Ser-Thr/Tyr_kinase_cat_dom"/>
</dbReference>
<dbReference type="InterPro" id="IPR008271">
    <property type="entry name" value="Ser/Thr_kinase_AS"/>
</dbReference>
<dbReference type="PANTHER" id="PTHR46204:SF30">
    <property type="entry name" value="CHITIN ELICITOR RECEPTOR KINASE 1"/>
    <property type="match status" value="1"/>
</dbReference>
<dbReference type="PANTHER" id="PTHR46204">
    <property type="entry name" value="CHITIN ELICITOR RECEPTOR KINASE 1-RELATED"/>
    <property type="match status" value="1"/>
</dbReference>
<dbReference type="Pfam" id="PF23472">
    <property type="entry name" value="LysM2_CERK1_LYK3_4_5"/>
    <property type="match status" value="1"/>
</dbReference>
<dbReference type="Pfam" id="PF23577">
    <property type="entry name" value="LysM_RLK"/>
    <property type="match status" value="1"/>
</dbReference>
<dbReference type="Pfam" id="PF07714">
    <property type="entry name" value="PK_Tyr_Ser-Thr"/>
    <property type="match status" value="1"/>
</dbReference>
<dbReference type="SMART" id="SM00220">
    <property type="entry name" value="S_TKc"/>
    <property type="match status" value="1"/>
</dbReference>
<dbReference type="SUPFAM" id="SSF56112">
    <property type="entry name" value="Protein kinase-like (PK-like)"/>
    <property type="match status" value="1"/>
</dbReference>
<dbReference type="PROSITE" id="PS51782">
    <property type="entry name" value="LYSM"/>
    <property type="match status" value="1"/>
</dbReference>
<dbReference type="PROSITE" id="PS00107">
    <property type="entry name" value="PROTEIN_KINASE_ATP"/>
    <property type="match status" value="1"/>
</dbReference>
<dbReference type="PROSITE" id="PS50011">
    <property type="entry name" value="PROTEIN_KINASE_DOM"/>
    <property type="match status" value="1"/>
</dbReference>
<dbReference type="PROSITE" id="PS00108">
    <property type="entry name" value="PROTEIN_KINASE_ST"/>
    <property type="match status" value="1"/>
</dbReference>
<organism>
    <name type="scientific">Arabidopsis thaliana</name>
    <name type="common">Mouse-ear cress</name>
    <dbReference type="NCBI Taxonomy" id="3702"/>
    <lineage>
        <taxon>Eukaryota</taxon>
        <taxon>Viridiplantae</taxon>
        <taxon>Streptophyta</taxon>
        <taxon>Embryophyta</taxon>
        <taxon>Tracheophyta</taxon>
        <taxon>Spermatophyta</taxon>
        <taxon>Magnoliopsida</taxon>
        <taxon>eudicotyledons</taxon>
        <taxon>Gunneridae</taxon>
        <taxon>Pentapetalae</taxon>
        <taxon>rosids</taxon>
        <taxon>malvids</taxon>
        <taxon>Brassicales</taxon>
        <taxon>Brassicaceae</taxon>
        <taxon>Camelineae</taxon>
        <taxon>Arabidopsis</taxon>
    </lineage>
</organism>
<proteinExistence type="evidence at protein level"/>
<reference key="1">
    <citation type="journal article" date="2007" name="Proc. Natl. Acad. Sci. U.S.A.">
        <title>CERK1, a LysM receptor kinase, is essential for chitin elicitor signaling in Arabidopsis.</title>
        <authorList>
            <person name="Miya A."/>
            <person name="Albert P."/>
            <person name="Shinya T."/>
            <person name="Desaki Y."/>
            <person name="Ichimura K."/>
            <person name="Shirasu K."/>
            <person name="Narusaka Y."/>
            <person name="Kawakami N."/>
            <person name="Kaku H."/>
            <person name="Shibuya N."/>
        </authorList>
    </citation>
    <scope>NUCLEOTIDE SEQUENCE [MRNA]</scope>
    <scope>FUNCTION</scope>
    <scope>CATALYTIC ACTIVITY</scope>
    <scope>DISRUPTION PHENOTYPE</scope>
    <scope>AUTOPHOSPHORYLATION</scope>
    <scope>INDUCTION BY CHITIN</scope>
    <scope>SUBCELLULAR LOCATION</scope>
    <source>
        <strain>cv. Columbia</strain>
    </source>
</reference>
<reference key="2">
    <citation type="journal article" date="2000" name="DNA Res.">
        <title>Structural analysis of Arabidopsis thaliana chromosome 3. I. Sequence features of the regions of 4,504,864 bp covered by sixty P1 and TAC clones.</title>
        <authorList>
            <person name="Sato S."/>
            <person name="Nakamura Y."/>
            <person name="Kaneko T."/>
            <person name="Katoh T."/>
            <person name="Asamizu E."/>
            <person name="Tabata S."/>
        </authorList>
    </citation>
    <scope>NUCLEOTIDE SEQUENCE [LARGE SCALE GENOMIC DNA]</scope>
    <source>
        <strain>cv. Columbia</strain>
    </source>
</reference>
<reference key="3">
    <citation type="journal article" date="2017" name="Plant J.">
        <title>Araport11: a complete reannotation of the Arabidopsis thaliana reference genome.</title>
        <authorList>
            <person name="Cheng C.Y."/>
            <person name="Krishnakumar V."/>
            <person name="Chan A.P."/>
            <person name="Thibaud-Nissen F."/>
            <person name="Schobel S."/>
            <person name="Town C.D."/>
        </authorList>
    </citation>
    <scope>GENOME REANNOTATION</scope>
    <source>
        <strain>cv. Columbia</strain>
    </source>
</reference>
<reference key="4">
    <citation type="journal article" date="2008" name="Plant Cell">
        <title>A LysM receptor-like kinase plays a critical role in chitin signaling and fungal resistance in Arabidopsis.</title>
        <authorList>
            <person name="Wan J."/>
            <person name="Zhang X.-C."/>
            <person name="Neece D."/>
            <person name="Ramonell K.M."/>
            <person name="Clough S."/>
            <person name="Kim S.-Y."/>
            <person name="Stacey M.G."/>
            <person name="Stacey G."/>
        </authorList>
    </citation>
    <scope>FUNCTION</scope>
    <scope>DISRUPTION PHENOTYPE</scope>
    <scope>TISSUE SPECIFICITY</scope>
</reference>
<reference key="5">
    <citation type="journal article" date="2009" name="Curr. Biol.">
        <title>AvrPtoB targets the LysM receptor kinase CERK1 to promote bacterial virulence on plants.</title>
        <authorList>
            <person name="Gimenez-Ibanez S."/>
            <person name="Hann D.R."/>
            <person name="Ntoukakis V."/>
            <person name="Petutschnig E."/>
            <person name="Lipka V."/>
            <person name="Rathjen J.P."/>
        </authorList>
    </citation>
    <scope>FUNCTION</scope>
    <scope>UBIQUITINATION</scope>
    <scope>INTERACTION WITH PSEUDOMONAS SYRINGAE HOPAB2/AVRPTOB</scope>
    <source>
        <strain>cv. Columbia</strain>
        <strain>cv. Wassilewskija-4</strain>
    </source>
</reference>
<reference key="6">
    <citation type="journal article" date="2009" name="Plant Signal. Behav.">
        <title>The LysM receptor kinase CERK1 mediates bacterial perception in Arabidopsis.</title>
        <authorList>
            <person name="Gimenez-Ibanez S."/>
            <person name="Ntoukakis V."/>
            <person name="Rathjen J.P."/>
        </authorList>
    </citation>
    <scope>FUNCTION</scope>
    <scope>DISRUPTION PHENOTYPE</scope>
    <scope>REVIEW</scope>
    <source>
        <strain>cv. Columbia</strain>
    </source>
</reference>
<reference key="7">
    <citation type="journal article" date="2010" name="J. Biol. Chem.">
        <title>Direct binding of a plant LysM receptor-like kinase, LysM RLK1/CERK1, to chitin in vitro.</title>
        <authorList>
            <person name="Iizasa E."/>
            <person name="Mitsutomi M."/>
            <person name="Nagano Y."/>
        </authorList>
    </citation>
    <scope>INTERACTION WITH CHITIN</scope>
    <scope>AUTOPHOSPHORYLATION</scope>
</reference>
<reference key="8">
    <citation type="journal article" date="2010" name="J. Biol. Chem.">
        <title>The lysin motif receptor-like kinase (LysM-RLK) CERK1 is a major chitin-binding protein in Arabidopsis thaliana and subject to chitin-induced phosphorylation.</title>
        <authorList>
            <person name="Petutschnig E.K."/>
            <person name="Jones A.M.E."/>
            <person name="Serazetdinova L."/>
            <person name="Lipka U."/>
            <person name="Lipka V."/>
        </authorList>
    </citation>
    <scope>FUNCTION</scope>
    <scope>CATALYTIC ACTIVITY</scope>
    <scope>INTERACTION WITH CHITIN AND DERIVATIVES</scope>
    <scope>AUTOPHOSPHORYLATION</scope>
    <scope>PHOSPHORYLATION AT SER-266; SER-268; SER-274 AND THR-519</scope>
</reference>
<reference key="9">
    <citation type="journal article" date="2011" name="Proc. Natl. Acad. Sci. U.S.A.">
        <title>Arabidopsis lysin-motif proteins LYM1 LYM3 CERK1 mediate bacterial peptidoglycan sensing and immunity to bacterial infection.</title>
        <authorList>
            <person name="Willmann R."/>
            <person name="Lajunen H.M."/>
            <person name="Erbs G."/>
            <person name="Newman M.-A."/>
            <person name="Kolb D."/>
            <person name="Tsuda K."/>
            <person name="Katagiri F."/>
            <person name="Fliegmann J."/>
            <person name="Bono J.-J."/>
            <person name="Cullimore J.V."/>
            <person name="Jehle A.K."/>
            <person name="Goetz F."/>
            <person name="Kulik A."/>
            <person name="Molinaro A."/>
            <person name="Lipka V."/>
            <person name="Gust A.A."/>
            <person name="Nuernberger T."/>
        </authorList>
    </citation>
    <scope>FUNCTION</scope>
    <scope>DISRUPTION PHENOTYPE</scope>
    <source>
        <strain>cv. Columbia</strain>
    </source>
</reference>
<reference key="10">
    <citation type="journal article" date="2012" name="Mol. Plant">
        <title>The LysM receptor-like kinase LysM RLK1 is required to activate defense and abiotic-stress responses induced by overexpression of fungal chitinases in Arabidopsis plants.</title>
        <authorList>
            <person name="Brotman Y."/>
            <person name="Landau U."/>
            <person name="Pnini S."/>
            <person name="Lisec J."/>
            <person name="Balazadeh S."/>
            <person name="Mueller-Roeber B."/>
            <person name="Zilberstein A."/>
            <person name="Willmitzer L."/>
            <person name="Chet I."/>
            <person name="Viterbo A."/>
        </authorList>
    </citation>
    <scope>FUNCTION</scope>
    <scope>DISRUPTION PHENOTYPE</scope>
</reference>
<reference key="11">
    <citation type="journal article" date="2012" name="Plant Cell Physiol.">
        <title>Functional characterization of CEBiP and CERK1 homologs in Arabidopsis and rice reveals the presence of different chitin receptor systems in plants.</title>
        <authorList>
            <person name="Shinya T."/>
            <person name="Motoyama N."/>
            <person name="Ikeda A."/>
            <person name="Wada M."/>
            <person name="Kamiya K."/>
            <person name="Hayafune M."/>
            <person name="Kaku H."/>
            <person name="Shibuya N."/>
        </authorList>
    </citation>
    <scope>FUNCTION</scope>
    <scope>INTERACTION WITH CHITIN</scope>
    <source>
        <strain>cv. Columbia</strain>
    </source>
</reference>
<reference key="12">
    <citation type="journal article" date="2012" name="Plant Physiol.">
        <title>LYK4, a lysin motif receptor-like kinase, is important for chitin signaling and plant innate immunity in Arabidopsis.</title>
        <authorList>
            <person name="Wan J."/>
            <person name="Tanaka K."/>
            <person name="Zhang X.-C."/>
            <person name="Son G.H."/>
            <person name="Brechenmacher L."/>
            <person name="Nguyen T.H.N."/>
            <person name="Stacey G."/>
        </authorList>
    </citation>
    <scope>INDUCTION BY CHITIN AND FLAGELLIN</scope>
</reference>
<reference key="13">
    <citation type="journal article" date="2012" name="Sci. Signal.">
        <title>How plant lysin motif receptors get activated: lessons learned from structural biology.</title>
        <authorList>
            <person name="Willmann R."/>
            <person name="Nuernberger T."/>
        </authorList>
    </citation>
    <scope>INTERACTION WITH CHITIN</scope>
    <scope>HOMODIMER</scope>
</reference>
<reference key="14">
    <citation type="journal article" date="2014" name="Plant J.">
        <title>Selective regulation of the chitin-induced defense response by the Arabidopsis receptor-like cytoplasmic kinase PBL27.</title>
        <authorList>
            <person name="Shinya T."/>
            <person name="Yamaguchi K."/>
            <person name="Desaki Y."/>
            <person name="Yamada K."/>
            <person name="Narisawa T."/>
            <person name="Kobayashi Y."/>
            <person name="Maeda K."/>
            <person name="Suzuki M."/>
            <person name="Tanimoto T."/>
            <person name="Takeda J."/>
            <person name="Nakashima M."/>
            <person name="Funama R."/>
            <person name="Narusaka M."/>
            <person name="Narusaka Y."/>
            <person name="Kaku H."/>
            <person name="Kawasaki T."/>
            <person name="Shibuya N."/>
        </authorList>
    </citation>
    <scope>FUNCTION</scope>
    <scope>DISRUPTION PHENOTYPE</scope>
    <scope>INTERACTION WITH PBL27</scope>
    <scope>MUTAGENESIS OF ASP-441</scope>
    <scope>SUBCELLULAR LOCATION</scope>
    <source>
        <strain>cv. Columbia</strain>
    </source>
</reference>
<reference key="15">
    <citation type="journal article" date="2016" name="EMBO J.">
        <title>The Arabidopsis CERK1-associated kinase PBL27 connects chitin perception to MAPK activation.</title>
        <authorList>
            <person name="Yamada K."/>
            <person name="Yamaguchi K."/>
            <person name="Shirakawa T."/>
            <person name="Nakagami H."/>
            <person name="Mine A."/>
            <person name="Ishikawa K."/>
            <person name="Fujiwara M."/>
            <person name="Narusaka M."/>
            <person name="Narusaka Y."/>
            <person name="Ichimura K."/>
            <person name="Kobayashi Y."/>
            <person name="Matsui H."/>
            <person name="Nomura Y."/>
            <person name="Nomoto M."/>
            <person name="Tada Y."/>
            <person name="Fukao Y."/>
            <person name="Fukamizo T."/>
            <person name="Tsuda K."/>
            <person name="Shirasu K."/>
            <person name="Shibuya N."/>
            <person name="Kawasaki T."/>
        </authorList>
    </citation>
    <scope>INTERACTION WITH PBL27</scope>
    <scope>SUBCELLULAR LOCATION</scope>
    <source>
        <strain>cv. Columbia</strain>
    </source>
</reference>
<reference key="16">
    <citation type="journal article" date="2016" name="Plant Cell">
        <title>The Arabidopsis malectin-like/LRR-RLK IOS1 is critical for BAK1-dependent and BAK1-independent pattern-triggered immunity.</title>
        <authorList>
            <person name="Yeh Y.-H."/>
            <person name="Panzeri D."/>
            <person name="Kadota Y."/>
            <person name="Huang Y.-C."/>
            <person name="Huang P.-Y."/>
            <person name="Tao C.-N."/>
            <person name="Roux M."/>
            <person name="Chien H.-C."/>
            <person name="Chin T.-C."/>
            <person name="Chu P.-W."/>
            <person name="Zipfel C."/>
            <person name="Zimmerli L."/>
        </authorList>
    </citation>
    <scope>INTERACTION WITH IOS1</scope>
</reference>
<reference key="17">
    <citation type="journal article" date="2012" name="Science">
        <title>Chitin-induced dimerization activates a plant immune receptor.</title>
        <authorList>
            <person name="Liu T."/>
            <person name="Liu Z."/>
            <person name="Song C."/>
            <person name="Hu Y."/>
            <person name="Han Z."/>
            <person name="She J."/>
            <person name="Fan F."/>
            <person name="Wang J."/>
            <person name="Jin C."/>
            <person name="Chang J."/>
            <person name="Zhou J.-M."/>
            <person name="Chai J."/>
        </authorList>
    </citation>
    <scope>X-RAY CRYSTALLOGRAPHY (1.65 ANGSTROMS) OF 25-230 IN COMPLEX WITH CHITIN OLIGOMERS</scope>
    <scope>HOMODIMER</scope>
    <scope>ACTIVITY REGULATION</scope>
    <scope>MUTAGENESIS OF ALA-138</scope>
    <scope>PHOSPHORYLATION</scope>
    <scope>GLYCOSYLATION AT ASN-40; ASN-52; ASN-102; ASN-123 AND ASN-152</scope>
    <scope>DISULFIDE BONDS</scope>
</reference>
<gene>
    <name type="primary">CERK1</name>
    <name type="synonym">LYK1</name>
    <name type="synonym">RLK1</name>
    <name type="ordered locus">At3g21630</name>
    <name type="ORF">MIL23.20</name>
</gene>
<protein>
    <recommendedName>
        <fullName>Chitin elicitor receptor kinase 1</fullName>
        <shortName>AtCERK1</shortName>
        <ecNumber>2.7.11.1</ecNumber>
    </recommendedName>
    <alternativeName>
        <fullName>LysM domain receptor-like kinase 1</fullName>
        <shortName>LysM RLK1</shortName>
        <shortName>LysM-containing receptor-like kinase 1</shortName>
    </alternativeName>
</protein>
<feature type="signal peptide" evidence="2">
    <location>
        <begin position="1"/>
        <end position="23"/>
    </location>
</feature>
<feature type="chain" id="PRO_0000420826" description="Chitin elicitor receptor kinase 1">
    <location>
        <begin position="24"/>
        <end position="617"/>
    </location>
</feature>
<feature type="topological domain" description="Extracellular" evidence="2">
    <location>
        <begin position="24"/>
        <end position="232"/>
    </location>
</feature>
<feature type="transmembrane region" description="Helical" evidence="2">
    <location>
        <begin position="233"/>
        <end position="253"/>
    </location>
</feature>
<feature type="topological domain" description="Cytoplasmic" evidence="2">
    <location>
        <begin position="254"/>
        <end position="617"/>
    </location>
</feature>
<feature type="domain" description="LysM 1; degenerate">
    <location>
        <begin position="46"/>
        <end position="74"/>
    </location>
</feature>
<feature type="domain" description="LysM 2; degenerate">
    <location>
        <begin position="108"/>
        <end position="140"/>
    </location>
</feature>
<feature type="domain" description="LysM 3" evidence="4">
    <location>
        <begin position="168"/>
        <end position="211"/>
    </location>
</feature>
<feature type="domain" description="Protein kinase" evidence="3">
    <location>
        <begin position="322"/>
        <end position="594"/>
    </location>
</feature>
<feature type="active site" description="Proton acceptor" evidence="3 5">
    <location>
        <position position="441"/>
    </location>
</feature>
<feature type="binding site">
    <location>
        <begin position="109"/>
        <end position="115"/>
    </location>
    <ligand>
        <name>chitin</name>
        <dbReference type="ChEBI" id="CHEBI:17029"/>
    </ligand>
</feature>
<feature type="binding site">
    <location>
        <begin position="137"/>
        <end position="143"/>
    </location>
    <ligand>
        <name>chitin</name>
        <dbReference type="ChEBI" id="CHEBI:17029"/>
    </ligand>
</feature>
<feature type="binding site" evidence="3">
    <location>
        <begin position="328"/>
        <end position="336"/>
    </location>
    <ligand>
        <name>ATP</name>
        <dbReference type="ChEBI" id="CHEBI:30616"/>
    </ligand>
</feature>
<feature type="binding site" evidence="3">
    <location>
        <position position="349"/>
    </location>
    <ligand>
        <name>ATP</name>
        <dbReference type="ChEBI" id="CHEBI:30616"/>
    </ligand>
</feature>
<feature type="modified residue" description="Phosphoserine" evidence="11">
    <location>
        <position position="266"/>
    </location>
</feature>
<feature type="modified residue" description="Phosphoserine" evidence="11">
    <location>
        <position position="268"/>
    </location>
</feature>
<feature type="modified residue" description="Phosphoserine" evidence="11">
    <location>
        <position position="274"/>
    </location>
</feature>
<feature type="modified residue" description="Phosphotyrosine" evidence="1">
    <location>
        <position position="390"/>
    </location>
</feature>
<feature type="modified residue" description="Phosphothreonine" evidence="1">
    <location>
        <position position="479"/>
    </location>
</feature>
<feature type="modified residue" description="Phosphothreonine" evidence="11">
    <location>
        <position position="519"/>
    </location>
</feature>
<feature type="glycosylation site" description="N-linked (GlcNAc...) asparagine" evidence="14 22">
    <location>
        <position position="40"/>
    </location>
</feature>
<feature type="glycosylation site" description="N-linked (GlcNAc...) asparagine" evidence="14 22">
    <location>
        <position position="52"/>
    </location>
</feature>
<feature type="glycosylation site" description="N-linked (GlcNAc...) asparagine" evidence="14 22">
    <location>
        <position position="102"/>
    </location>
</feature>
<feature type="glycosylation site" description="N-linked (GlcNAc...) asparagine" evidence="14 22">
    <location>
        <position position="123"/>
    </location>
</feature>
<feature type="glycosylation site" description="N-linked (GlcNAc...) asparagine" evidence="14 22">
    <location>
        <position position="152"/>
    </location>
</feature>
<feature type="disulfide bond" evidence="14 22">
    <location>
        <begin position="25"/>
        <end position="93"/>
    </location>
</feature>
<feature type="disulfide bond" evidence="14 22">
    <location>
        <begin position="29"/>
        <end position="155"/>
    </location>
</feature>
<feature type="disulfide bond" evidence="14 22">
    <location>
        <begin position="91"/>
        <end position="153"/>
    </location>
</feature>
<feature type="mutagenesis site" description="Slower chitin-mediated phosphorylation." evidence="14">
    <original>A</original>
    <variation>H</variation>
    <location>
        <position position="138"/>
    </location>
</feature>
<feature type="mutagenesis site" description="Increased affinity for PBL27." evidence="18">
    <original>D</original>
    <variation>V</variation>
    <location>
        <position position="441"/>
    </location>
</feature>
<feature type="strand" evidence="23">
    <location>
        <begin position="32"/>
        <end position="37"/>
    </location>
</feature>
<feature type="helix" evidence="23">
    <location>
        <begin position="44"/>
        <end position="50"/>
    </location>
</feature>
<feature type="strand" evidence="23">
    <location>
        <begin position="54"/>
        <end position="56"/>
    </location>
</feature>
<feature type="helix" evidence="23">
    <location>
        <begin position="64"/>
        <end position="67"/>
    </location>
</feature>
<feature type="strand" evidence="23">
    <location>
        <begin position="84"/>
        <end position="89"/>
    </location>
</feature>
<feature type="strand" evidence="23">
    <location>
        <begin position="92"/>
        <end position="94"/>
    </location>
</feature>
<feature type="turn" evidence="23">
    <location>
        <begin position="95"/>
        <end position="97"/>
    </location>
</feature>
<feature type="strand" evidence="23">
    <location>
        <begin position="98"/>
        <end position="106"/>
    </location>
</feature>
<feature type="helix" evidence="23">
    <location>
        <begin position="113"/>
        <end position="118"/>
    </location>
</feature>
<feature type="turn" evidence="23">
    <location>
        <begin position="119"/>
        <end position="123"/>
    </location>
</feature>
<feature type="helix" evidence="23">
    <location>
        <begin position="127"/>
        <end position="133"/>
    </location>
</feature>
<feature type="helix" evidence="24">
    <location>
        <begin position="138"/>
        <end position="140"/>
    </location>
</feature>
<feature type="strand" evidence="23">
    <location>
        <begin position="146"/>
        <end position="152"/>
    </location>
</feature>
<feature type="turn" evidence="23">
    <location>
        <begin position="158"/>
        <end position="160"/>
    </location>
</feature>
<feature type="strand" evidence="23">
    <location>
        <begin position="167"/>
        <end position="171"/>
    </location>
</feature>
<feature type="helix" evidence="23">
    <location>
        <begin position="178"/>
        <end position="185"/>
    </location>
</feature>
<feature type="helix" evidence="23">
    <location>
        <begin position="189"/>
        <end position="195"/>
    </location>
</feature>
<feature type="strand" evidence="23">
    <location>
        <begin position="205"/>
        <end position="211"/>
    </location>
</feature>
<sequence length="617" mass="67315">MKLKISLIAPILLLFSFFFAVESKCRTSCPLALASYYLENGTTLSVINQNLNSSIAPYDQINFDPILRYNSNIKDKDRIQMGSRVLVPFPCECQPGDFLGHNFSYSVRQEDTYERVAISNYANLTTMESLQARNPFPATNIPLSATLNVLVNCSCGDESVSKDFGLFVTYPLRPEDSLSSIARSSGVSADILQRYNPGVNFNSGNGIVYVPGRDPNGAFPPFKSSKQDGVGAGVIAGIVIGVIVALLLILFIVYYAYRKNKSKGDSFSSSIPLSTKADHASSTSLQSGGLGGAGVSPGIAAISVDKSVEFSLEELAKATDNFNLSFKIGQGGFGAVYYAELRGEKAAIKKMDMEASKQFLAELKVLTRVHHVNLVRLIGYCVEGSLFLVYEYVENGNLGQHLHGSGREPLPWTKRVQIALDSARGLEYIHEHTVPVYVHRDIKSANILIDQKFRAKVADFGLTKLTEVGGSATRGAMGTFGYMAPETVYGEVSAKVDVYAFGVVLYELISAKGAVVKMTEAVGEFRGLVGVFEESFKETDKEEALRKIIDPRLGDSYPFDSVYKMAELGKACTQENAQLRPSMRYIVVALSTLFSSTGNWDVGNFQNEDLVSLMSGR</sequence>